<reference key="1">
    <citation type="journal article" date="2005" name="Science">
        <title>The transcriptional landscape of the mammalian genome.</title>
        <authorList>
            <person name="Carninci P."/>
            <person name="Kasukawa T."/>
            <person name="Katayama S."/>
            <person name="Gough J."/>
            <person name="Frith M.C."/>
            <person name="Maeda N."/>
            <person name="Oyama R."/>
            <person name="Ravasi T."/>
            <person name="Lenhard B."/>
            <person name="Wells C."/>
            <person name="Kodzius R."/>
            <person name="Shimokawa K."/>
            <person name="Bajic V.B."/>
            <person name="Brenner S.E."/>
            <person name="Batalov S."/>
            <person name="Forrest A.R."/>
            <person name="Zavolan M."/>
            <person name="Davis M.J."/>
            <person name="Wilming L.G."/>
            <person name="Aidinis V."/>
            <person name="Allen J.E."/>
            <person name="Ambesi-Impiombato A."/>
            <person name="Apweiler R."/>
            <person name="Aturaliya R.N."/>
            <person name="Bailey T.L."/>
            <person name="Bansal M."/>
            <person name="Baxter L."/>
            <person name="Beisel K.W."/>
            <person name="Bersano T."/>
            <person name="Bono H."/>
            <person name="Chalk A.M."/>
            <person name="Chiu K.P."/>
            <person name="Choudhary V."/>
            <person name="Christoffels A."/>
            <person name="Clutterbuck D.R."/>
            <person name="Crowe M.L."/>
            <person name="Dalla E."/>
            <person name="Dalrymple B.P."/>
            <person name="de Bono B."/>
            <person name="Della Gatta G."/>
            <person name="di Bernardo D."/>
            <person name="Down T."/>
            <person name="Engstrom P."/>
            <person name="Fagiolini M."/>
            <person name="Faulkner G."/>
            <person name="Fletcher C.F."/>
            <person name="Fukushima T."/>
            <person name="Furuno M."/>
            <person name="Futaki S."/>
            <person name="Gariboldi M."/>
            <person name="Georgii-Hemming P."/>
            <person name="Gingeras T.R."/>
            <person name="Gojobori T."/>
            <person name="Green R.E."/>
            <person name="Gustincich S."/>
            <person name="Harbers M."/>
            <person name="Hayashi Y."/>
            <person name="Hensch T.K."/>
            <person name="Hirokawa N."/>
            <person name="Hill D."/>
            <person name="Huminiecki L."/>
            <person name="Iacono M."/>
            <person name="Ikeo K."/>
            <person name="Iwama A."/>
            <person name="Ishikawa T."/>
            <person name="Jakt M."/>
            <person name="Kanapin A."/>
            <person name="Katoh M."/>
            <person name="Kawasawa Y."/>
            <person name="Kelso J."/>
            <person name="Kitamura H."/>
            <person name="Kitano H."/>
            <person name="Kollias G."/>
            <person name="Krishnan S.P."/>
            <person name="Kruger A."/>
            <person name="Kummerfeld S.K."/>
            <person name="Kurochkin I.V."/>
            <person name="Lareau L.F."/>
            <person name="Lazarevic D."/>
            <person name="Lipovich L."/>
            <person name="Liu J."/>
            <person name="Liuni S."/>
            <person name="McWilliam S."/>
            <person name="Madan Babu M."/>
            <person name="Madera M."/>
            <person name="Marchionni L."/>
            <person name="Matsuda H."/>
            <person name="Matsuzawa S."/>
            <person name="Miki H."/>
            <person name="Mignone F."/>
            <person name="Miyake S."/>
            <person name="Morris K."/>
            <person name="Mottagui-Tabar S."/>
            <person name="Mulder N."/>
            <person name="Nakano N."/>
            <person name="Nakauchi H."/>
            <person name="Ng P."/>
            <person name="Nilsson R."/>
            <person name="Nishiguchi S."/>
            <person name="Nishikawa S."/>
            <person name="Nori F."/>
            <person name="Ohara O."/>
            <person name="Okazaki Y."/>
            <person name="Orlando V."/>
            <person name="Pang K.C."/>
            <person name="Pavan W.J."/>
            <person name="Pavesi G."/>
            <person name="Pesole G."/>
            <person name="Petrovsky N."/>
            <person name="Piazza S."/>
            <person name="Reed J."/>
            <person name="Reid J.F."/>
            <person name="Ring B.Z."/>
            <person name="Ringwald M."/>
            <person name="Rost B."/>
            <person name="Ruan Y."/>
            <person name="Salzberg S.L."/>
            <person name="Sandelin A."/>
            <person name="Schneider C."/>
            <person name="Schoenbach C."/>
            <person name="Sekiguchi K."/>
            <person name="Semple C.A."/>
            <person name="Seno S."/>
            <person name="Sessa L."/>
            <person name="Sheng Y."/>
            <person name="Shibata Y."/>
            <person name="Shimada H."/>
            <person name="Shimada K."/>
            <person name="Silva D."/>
            <person name="Sinclair B."/>
            <person name="Sperling S."/>
            <person name="Stupka E."/>
            <person name="Sugiura K."/>
            <person name="Sultana R."/>
            <person name="Takenaka Y."/>
            <person name="Taki K."/>
            <person name="Tammoja K."/>
            <person name="Tan S.L."/>
            <person name="Tang S."/>
            <person name="Taylor M.S."/>
            <person name="Tegner J."/>
            <person name="Teichmann S.A."/>
            <person name="Ueda H.R."/>
            <person name="van Nimwegen E."/>
            <person name="Verardo R."/>
            <person name="Wei C.L."/>
            <person name="Yagi K."/>
            <person name="Yamanishi H."/>
            <person name="Zabarovsky E."/>
            <person name="Zhu S."/>
            <person name="Zimmer A."/>
            <person name="Hide W."/>
            <person name="Bult C."/>
            <person name="Grimmond S.M."/>
            <person name="Teasdale R.D."/>
            <person name="Liu E.T."/>
            <person name="Brusic V."/>
            <person name="Quackenbush J."/>
            <person name="Wahlestedt C."/>
            <person name="Mattick J.S."/>
            <person name="Hume D.A."/>
            <person name="Kai C."/>
            <person name="Sasaki D."/>
            <person name="Tomaru Y."/>
            <person name="Fukuda S."/>
            <person name="Kanamori-Katayama M."/>
            <person name="Suzuki M."/>
            <person name="Aoki J."/>
            <person name="Arakawa T."/>
            <person name="Iida J."/>
            <person name="Imamura K."/>
            <person name="Itoh M."/>
            <person name="Kato T."/>
            <person name="Kawaji H."/>
            <person name="Kawagashira N."/>
            <person name="Kawashima T."/>
            <person name="Kojima M."/>
            <person name="Kondo S."/>
            <person name="Konno H."/>
            <person name="Nakano K."/>
            <person name="Ninomiya N."/>
            <person name="Nishio T."/>
            <person name="Okada M."/>
            <person name="Plessy C."/>
            <person name="Shibata K."/>
            <person name="Shiraki T."/>
            <person name="Suzuki S."/>
            <person name="Tagami M."/>
            <person name="Waki K."/>
            <person name="Watahiki A."/>
            <person name="Okamura-Oho Y."/>
            <person name="Suzuki H."/>
            <person name="Kawai J."/>
            <person name="Hayashizaki Y."/>
        </authorList>
    </citation>
    <scope>NUCLEOTIDE SEQUENCE [LARGE SCALE MRNA] (ISOFORM 1)</scope>
    <source>
        <strain>C57BL/6J</strain>
        <tissue>Testis</tissue>
    </source>
</reference>
<reference key="2">
    <citation type="journal article" date="2004" name="Genome Res.">
        <title>The status, quality, and expansion of the NIH full-length cDNA project: the Mammalian Gene Collection (MGC).</title>
        <authorList>
            <consortium name="The MGC Project Team"/>
        </authorList>
    </citation>
    <scope>NUCLEOTIDE SEQUENCE [LARGE SCALE MRNA] (ISOFORM 2)</scope>
    <scope>NUCLEOTIDE SEQUENCE [LARGE SCALE MRNA] OF 1-304 (ISOFORM 1)</scope>
    <source>
        <strain>C57BL/6J</strain>
        <strain>FVB/N</strain>
        <tissue>Heart</tissue>
        <tissue>Mammary tumor</tissue>
        <tissue>Thyroid</tissue>
    </source>
</reference>
<reference key="3">
    <citation type="journal article" date="2005" name="Exp. Cell Res.">
        <title>CIR, a corepressor of CBF1, binds to PAP-1 and effects alternative splicing.</title>
        <authorList>
            <person name="Maita H."/>
            <person name="Kitaura H."/>
            <person name="Ariga H."/>
            <person name="Iguchi-Ariga S.M.M."/>
        </authorList>
    </citation>
    <scope>FUNCTION</scope>
    <scope>INTERACTION WITH RP9; SNW1; SFRS1; SFRS2 AND U2AF1</scope>
    <scope>SUBCELLULAR LOCATION</scope>
    <scope>TISSUE SPECIFICITY</scope>
</reference>
<reference key="4">
    <citation type="journal article" date="2010" name="Cell">
        <title>A tissue-specific atlas of mouse protein phosphorylation and expression.</title>
        <authorList>
            <person name="Huttlin E.L."/>
            <person name="Jedrychowski M.P."/>
            <person name="Elias J.E."/>
            <person name="Goswami T."/>
            <person name="Rad R."/>
            <person name="Beausoleil S.A."/>
            <person name="Villen J."/>
            <person name="Haas W."/>
            <person name="Sowa M.E."/>
            <person name="Gygi S.P."/>
        </authorList>
    </citation>
    <scope>PHOSPHORYLATION [LARGE SCALE ANALYSIS] AT SER-202</scope>
    <scope>IDENTIFICATION BY MASS SPECTROMETRY [LARGE SCALE ANALYSIS]</scope>
    <source>
        <tissue>Brown adipose tissue</tissue>
        <tissue>Kidney</tissue>
        <tissue>Lung</tissue>
        <tissue>Pancreas</tissue>
        <tissue>Spleen</tissue>
        <tissue>Testis</tissue>
    </source>
</reference>
<reference key="5">
    <citation type="journal article" date="2015" name="PLoS ONE">
        <title>A novel transcriptional factor Nkapl is a germ cell-specific suppressor of Notch signaling and is indispensable for spermatogenesis.</title>
        <authorList>
            <person name="Okuda H."/>
            <person name="Kiuchi H."/>
            <person name="Takao T."/>
            <person name="Miyagawa Y."/>
            <person name="Tsujimura A."/>
            <person name="Nonomura N."/>
            <person name="Miyata H."/>
            <person name="Okabe M."/>
            <person name="Ikawa M."/>
            <person name="Kawakami Y."/>
            <person name="Goshima N."/>
            <person name="Wada M."/>
            <person name="Tanaka H."/>
        </authorList>
    </citation>
    <scope>INTERACTION WITH NKAPL</scope>
</reference>
<keyword id="KW-0025">Alternative splicing</keyword>
<keyword id="KW-0963">Cytoplasm</keyword>
<keyword id="KW-0206">Cytoskeleton</keyword>
<keyword id="KW-1017">Isopeptide bond</keyword>
<keyword id="KW-0507">mRNA processing</keyword>
<keyword id="KW-0508">mRNA splicing</keyword>
<keyword id="KW-0539">Nucleus</keyword>
<keyword id="KW-0597">Phosphoprotein</keyword>
<keyword id="KW-1185">Reference proteome</keyword>
<keyword id="KW-0678">Repressor</keyword>
<keyword id="KW-0804">Transcription</keyword>
<keyword id="KW-0805">Transcription regulation</keyword>
<keyword id="KW-0832">Ubl conjugation</keyword>
<evidence type="ECO:0000250" key="1"/>
<evidence type="ECO:0000250" key="2">
    <source>
        <dbReference type="UniProtKB" id="Q86X95"/>
    </source>
</evidence>
<evidence type="ECO:0000255" key="3"/>
<evidence type="ECO:0000256" key="4">
    <source>
        <dbReference type="SAM" id="MobiDB-lite"/>
    </source>
</evidence>
<evidence type="ECO:0000269" key="5">
    <source>
    </source>
</evidence>
<evidence type="ECO:0000269" key="6">
    <source>
    </source>
</evidence>
<evidence type="ECO:0000303" key="7">
    <source>
    </source>
</evidence>
<evidence type="ECO:0000305" key="8"/>
<evidence type="ECO:0007744" key="9">
    <source>
    </source>
</evidence>
<name>CIR1_MOUSE</name>
<gene>
    <name type="primary">Cir1</name>
    <name type="synonym">Cir</name>
</gene>
<feature type="chain" id="PRO_0000247985" description="Corepressor interacting with RBPJ 1">
    <location>
        <begin position="1"/>
        <end position="450"/>
    </location>
</feature>
<feature type="region of interest" description="Interaction with RBPJ" evidence="1">
    <location>
        <begin position="1"/>
        <end position="121"/>
    </location>
</feature>
<feature type="region of interest" description="Interaction with RP9" evidence="5">
    <location>
        <begin position="204"/>
        <end position="232"/>
    </location>
</feature>
<feature type="region of interest" description="Disordered" evidence="4">
    <location>
        <begin position="218"/>
        <end position="450"/>
    </location>
</feature>
<feature type="short sequence motif" description="Nuclear localization signal" evidence="3">
    <location>
        <begin position="235"/>
        <end position="247"/>
    </location>
</feature>
<feature type="short sequence motif" description="Nuclear localization signal" evidence="3">
    <location>
        <begin position="307"/>
        <end position="314"/>
    </location>
</feature>
<feature type="compositionally biased region" description="Basic residues" evidence="4">
    <location>
        <begin position="233"/>
        <end position="260"/>
    </location>
</feature>
<feature type="compositionally biased region" description="Low complexity" evidence="4">
    <location>
        <begin position="261"/>
        <end position="294"/>
    </location>
</feature>
<feature type="compositionally biased region" description="Basic residues" evidence="4">
    <location>
        <begin position="303"/>
        <end position="313"/>
    </location>
</feature>
<feature type="compositionally biased region" description="Basic and acidic residues" evidence="4">
    <location>
        <begin position="314"/>
        <end position="329"/>
    </location>
</feature>
<feature type="compositionally biased region" description="Basic and acidic residues" evidence="4">
    <location>
        <begin position="340"/>
        <end position="354"/>
    </location>
</feature>
<feature type="compositionally biased region" description="Basic residues" evidence="4">
    <location>
        <begin position="404"/>
        <end position="424"/>
    </location>
</feature>
<feature type="compositionally biased region" description="Basic and acidic residues" evidence="4">
    <location>
        <begin position="425"/>
        <end position="450"/>
    </location>
</feature>
<feature type="modified residue" description="Phosphoserine" evidence="9">
    <location>
        <position position="202"/>
    </location>
</feature>
<feature type="cross-link" description="Glycyl lysine isopeptide (Lys-Gly) (interchain with G-Cter in SUMO2)" evidence="2">
    <location>
        <position position="79"/>
    </location>
</feature>
<feature type="cross-link" description="Glycyl lysine isopeptide (Lys-Gly) (interchain with G-Cter in SUMO2)" evidence="2">
    <location>
        <position position="354"/>
    </location>
</feature>
<feature type="splice variant" id="VSP_020093" description="In isoform 2." evidence="7">
    <location>
        <begin position="107"/>
        <end position="450"/>
    </location>
</feature>
<feature type="sequence conflict" description="In Ref. 2; AAH89602." evidence="8" ref="2">
    <original>M</original>
    <variation>T</variation>
    <location>
        <position position="9"/>
    </location>
</feature>
<feature type="sequence conflict" description="In Ref. 2; AAH94283." evidence="8" ref="2">
    <location>
        <begin position="263"/>
        <end position="272"/>
    </location>
</feature>
<feature type="sequence conflict" description="In Ref. 2; BAB24488." evidence="8" ref="2">
    <original>S</original>
    <variation>T</variation>
    <location>
        <position position="278"/>
    </location>
</feature>
<dbReference type="EMBL" id="AK006260">
    <property type="protein sequence ID" value="BAB24488.1"/>
    <property type="molecule type" value="mRNA"/>
</dbReference>
<dbReference type="EMBL" id="AK131674">
    <property type="protein sequence ID" value="BAE20758.1"/>
    <property type="molecule type" value="mRNA"/>
</dbReference>
<dbReference type="EMBL" id="BC089602">
    <property type="protein sequence ID" value="AAH89602.1"/>
    <property type="molecule type" value="mRNA"/>
</dbReference>
<dbReference type="EMBL" id="BC094283">
    <property type="protein sequence ID" value="AAH94283.1"/>
    <property type="status" value="ALT_SEQ"/>
    <property type="molecule type" value="mRNA"/>
</dbReference>
<dbReference type="EMBL" id="BC099444">
    <property type="status" value="NOT_ANNOTATED_CDS"/>
    <property type="molecule type" value="mRNA"/>
</dbReference>
<dbReference type="CCDS" id="CCDS16127.1">
    <molecule id="Q9DA19-1"/>
</dbReference>
<dbReference type="RefSeq" id="NP_080130.2">
    <molecule id="Q9DA19-1"/>
    <property type="nucleotide sequence ID" value="NM_025854.4"/>
</dbReference>
<dbReference type="SMR" id="Q9DA19"/>
<dbReference type="BioGRID" id="211822">
    <property type="interactions" value="4"/>
</dbReference>
<dbReference type="FunCoup" id="Q9DA19">
    <property type="interactions" value="2621"/>
</dbReference>
<dbReference type="IntAct" id="Q9DA19">
    <property type="interactions" value="3"/>
</dbReference>
<dbReference type="MINT" id="Q9DA19"/>
<dbReference type="STRING" id="10090.ENSMUSP00000049834"/>
<dbReference type="iPTMnet" id="Q9DA19"/>
<dbReference type="PhosphoSitePlus" id="Q9DA19"/>
<dbReference type="jPOST" id="Q9DA19"/>
<dbReference type="PaxDb" id="10090-ENSMUSP00000049834"/>
<dbReference type="PeptideAtlas" id="Q9DA19"/>
<dbReference type="ProteomicsDB" id="279082">
    <molecule id="Q9DA19-1"/>
</dbReference>
<dbReference type="ProteomicsDB" id="279083">
    <molecule id="Q9DA19-3"/>
</dbReference>
<dbReference type="Pumba" id="Q9DA19"/>
<dbReference type="Antibodypedia" id="19463">
    <property type="antibodies" value="142 antibodies from 23 providers"/>
</dbReference>
<dbReference type="DNASU" id="66935"/>
<dbReference type="Ensembl" id="ENSMUST00000058615.10">
    <molecule id="Q9DA19-1"/>
    <property type="protein sequence ID" value="ENSMUSP00000049834.10"/>
    <property type="gene ID" value="ENSMUSG00000041777.13"/>
</dbReference>
<dbReference type="GeneID" id="66935"/>
<dbReference type="KEGG" id="mmu:66935"/>
<dbReference type="UCSC" id="uc008kck.2">
    <molecule id="Q9DA19-1"/>
    <property type="organism name" value="mouse"/>
</dbReference>
<dbReference type="AGR" id="MGI:1914185"/>
<dbReference type="CTD" id="9541"/>
<dbReference type="MGI" id="MGI:1914185">
    <property type="gene designation" value="Cir1"/>
</dbReference>
<dbReference type="VEuPathDB" id="HostDB:ENSMUSG00000041777"/>
<dbReference type="eggNOG" id="KOG3794">
    <property type="taxonomic scope" value="Eukaryota"/>
</dbReference>
<dbReference type="GeneTree" id="ENSGT00730000111135"/>
<dbReference type="HOGENOM" id="CLU_035642_2_0_1"/>
<dbReference type="InParanoid" id="Q9DA19"/>
<dbReference type="OMA" id="CSMYSIS"/>
<dbReference type="OrthoDB" id="6253837at2759"/>
<dbReference type="PhylomeDB" id="Q9DA19"/>
<dbReference type="TreeFam" id="TF317567"/>
<dbReference type="BioGRID-ORCS" id="66935">
    <property type="hits" value="18 hits in 78 CRISPR screens"/>
</dbReference>
<dbReference type="ChiTaRS" id="Cir1">
    <property type="organism name" value="mouse"/>
</dbReference>
<dbReference type="PRO" id="PR:Q9DA19"/>
<dbReference type="Proteomes" id="UP000000589">
    <property type="component" value="Chromosome 2"/>
</dbReference>
<dbReference type="RNAct" id="Q9DA19">
    <property type="molecule type" value="protein"/>
</dbReference>
<dbReference type="Bgee" id="ENSMUSG00000041777">
    <property type="expression patterns" value="Expressed in bone marrow and 74 other cell types or tissues"/>
</dbReference>
<dbReference type="GO" id="GO:0005813">
    <property type="term" value="C:centrosome"/>
    <property type="evidence" value="ECO:0007669"/>
    <property type="project" value="UniProtKB-SubCell"/>
</dbReference>
<dbReference type="GO" id="GO:0005737">
    <property type="term" value="C:cytoplasm"/>
    <property type="evidence" value="ECO:0007669"/>
    <property type="project" value="UniProtKB-KW"/>
</dbReference>
<dbReference type="GO" id="GO:0016607">
    <property type="term" value="C:nuclear speck"/>
    <property type="evidence" value="ECO:0000266"/>
    <property type="project" value="MGI"/>
</dbReference>
<dbReference type="GO" id="GO:0005634">
    <property type="term" value="C:nucleus"/>
    <property type="evidence" value="ECO:0000266"/>
    <property type="project" value="MGI"/>
</dbReference>
<dbReference type="GO" id="GO:0032991">
    <property type="term" value="C:protein-containing complex"/>
    <property type="evidence" value="ECO:0007669"/>
    <property type="project" value="Ensembl"/>
</dbReference>
<dbReference type="GO" id="GO:0042826">
    <property type="term" value="F:histone deacetylase binding"/>
    <property type="evidence" value="ECO:0000266"/>
    <property type="project" value="MGI"/>
</dbReference>
<dbReference type="GO" id="GO:0019901">
    <property type="term" value="F:protein kinase binding"/>
    <property type="evidence" value="ECO:0007669"/>
    <property type="project" value="Ensembl"/>
</dbReference>
<dbReference type="GO" id="GO:0044877">
    <property type="term" value="F:protein-containing complex binding"/>
    <property type="evidence" value="ECO:0007669"/>
    <property type="project" value="Ensembl"/>
</dbReference>
<dbReference type="GO" id="GO:0003714">
    <property type="term" value="F:transcription corepressor activity"/>
    <property type="evidence" value="ECO:0007669"/>
    <property type="project" value="Ensembl"/>
</dbReference>
<dbReference type="GO" id="GO:0001701">
    <property type="term" value="P:in utero embryonic development"/>
    <property type="evidence" value="ECO:0000315"/>
    <property type="project" value="MGI"/>
</dbReference>
<dbReference type="GO" id="GO:0006397">
    <property type="term" value="P:mRNA processing"/>
    <property type="evidence" value="ECO:0007669"/>
    <property type="project" value="UniProtKB-KW"/>
</dbReference>
<dbReference type="GO" id="GO:0045892">
    <property type="term" value="P:negative regulation of DNA-templated transcription"/>
    <property type="evidence" value="ECO:0000266"/>
    <property type="project" value="MGI"/>
</dbReference>
<dbReference type="GO" id="GO:0000122">
    <property type="term" value="P:negative regulation of transcription by RNA polymerase II"/>
    <property type="evidence" value="ECO:0000250"/>
    <property type="project" value="BHF-UCL"/>
</dbReference>
<dbReference type="GO" id="GO:0045944">
    <property type="term" value="P:positive regulation of transcription by RNA polymerase II"/>
    <property type="evidence" value="ECO:0000250"/>
    <property type="project" value="BHF-UCL"/>
</dbReference>
<dbReference type="GO" id="GO:0008380">
    <property type="term" value="P:RNA splicing"/>
    <property type="evidence" value="ECO:0007669"/>
    <property type="project" value="UniProtKB-KW"/>
</dbReference>
<dbReference type="InterPro" id="IPR040014">
    <property type="entry name" value="CIR1"/>
</dbReference>
<dbReference type="InterPro" id="IPR019339">
    <property type="entry name" value="CIR_N_dom"/>
</dbReference>
<dbReference type="PANTHER" id="PTHR13151">
    <property type="entry name" value="CBF1 INTERACTING COREPRESSOR CIR"/>
    <property type="match status" value="1"/>
</dbReference>
<dbReference type="PANTHER" id="PTHR13151:SF2">
    <property type="entry name" value="COREPRESSOR INTERACTING WITH RBPJ 1"/>
    <property type="match status" value="1"/>
</dbReference>
<dbReference type="Pfam" id="PF10197">
    <property type="entry name" value="Cir_N"/>
    <property type="match status" value="1"/>
</dbReference>
<dbReference type="SMART" id="SM01083">
    <property type="entry name" value="Cir_N"/>
    <property type="match status" value="1"/>
</dbReference>
<protein>
    <recommendedName>
        <fullName>Corepressor interacting with RBPJ 1</fullName>
    </recommendedName>
    <alternativeName>
        <fullName>CBF1-interacting corepressor</fullName>
    </alternativeName>
</protein>
<accession>Q9DA19</accession>
<accession>Q3V2N9</accession>
<accession>Q4KL44</accession>
<accession>Q52KL9</accession>
<accession>Q5FW66</accession>
<sequence length="450" mass="51838">MGKSFANFMCKKDFHPASKSNIKKVWMAEQKISYDKKKQEELMQQYLKEQESYDNRLLMGDERVKNGLNFMYEAPPGVKKENKEKEETEGETEYKFEWQKGAPREKYAKDDMNIRDQPFGIQVRNVRCIKCHKWGHVNTDRECPLFGLSGINASSVPTDGSGPSMHPSELIAEMRNSGFALKRNVLGRNLTANDPSQDYVASDCEEDPEVEFLKSLTTKQKQKLLRKLDRLEKKKKKKKSDKKKKKLQKSKNKHKKRKNKSPSSSSSSSSSSSSSSSSSSSSSSSSETSDSSSESDNKEKKREKEKRKKKKKTKCSESKSSDCKEDKPKNMLYEELSSSHSDRGKAQEKLRFPKQESSGENSMWVHSASDRTSRSHRHSPEKKGSDRNRGIRSRSRSRAESSRRSRSRSPYRQKHREVRSRPHRSPSEEQKGRKGTRSHGEGDHRREHVR</sequence>
<proteinExistence type="evidence at protein level"/>
<comment type="function">
    <text evidence="1 5">Regulates transcription and acts as a corepressor for RBPJ. Recruits RBPJ to the Sin3-histone deacetylase complex (HDAC). Required for RBPJ-mediated repression of transcription (By similarity). May modulate splice site selection during alternative splicing of pre-mRNAs.</text>
</comment>
<comment type="subunit">
    <text evidence="2 5 6">Interacts with RP9, SNW1, SFRS1, SFRS2,U2AF1, RBPJ, SAP30, HDAC2 NKAP and NEK6. Interacts with Epstein-Barr virus RPMS1. Component of the histone deacetylase complex. Component of the Notch corepressor complex. Interacts with NKAPL (PubMed:25875095).</text>
</comment>
<comment type="interaction">
    <interactant intactId="EBI-309693">
        <id>Q9DA19</id>
    </interactant>
    <interactant intactId="EBI-626715">
        <id>P97762</id>
        <label>rp9</label>
    </interactant>
    <organismsDiffer>false</organismsDiffer>
    <experiments>6</experiments>
</comment>
<comment type="subcellular location">
    <subcellularLocation>
        <location evidence="5">Nucleus speckle</location>
    </subcellularLocation>
    <subcellularLocation>
        <location evidence="1">Cytoplasm</location>
        <location evidence="1">Cytoskeleton</location>
        <location evidence="1">Microtubule organizing center</location>
        <location evidence="1">Centrosome</location>
    </subcellularLocation>
    <text evidence="1">Colocalizes with NEK6 in the centrosome.</text>
</comment>
<comment type="alternative products">
    <event type="alternative splicing"/>
    <isoform>
        <id>Q9DA19-1</id>
        <name>1</name>
        <sequence type="displayed"/>
    </isoform>
    <isoform>
        <id>Q9DA19-3</id>
        <name>2</name>
        <sequence type="described" ref="VSP_020093"/>
    </isoform>
</comment>
<comment type="PTM">
    <text evidence="1">Phosphorylated by NEK6.</text>
</comment>
<comment type="miscellaneous">
    <molecule>Isoform 2</molecule>
    <text evidence="8">May be produced at very low levels due to a premature stop codon in the mRNA, leading to nonsense-mediated mRNA decay.</text>
</comment>
<comment type="sequence caution" evidence="8">
    <conflict type="miscellaneous discrepancy">
        <sequence resource="EMBL-CDS" id="AAH94283"/>
    </conflict>
    <text>Contaminating sequence. Potential poly-A sequence.</text>
</comment>
<organism>
    <name type="scientific">Mus musculus</name>
    <name type="common">Mouse</name>
    <dbReference type="NCBI Taxonomy" id="10090"/>
    <lineage>
        <taxon>Eukaryota</taxon>
        <taxon>Metazoa</taxon>
        <taxon>Chordata</taxon>
        <taxon>Craniata</taxon>
        <taxon>Vertebrata</taxon>
        <taxon>Euteleostomi</taxon>
        <taxon>Mammalia</taxon>
        <taxon>Eutheria</taxon>
        <taxon>Euarchontoglires</taxon>
        <taxon>Glires</taxon>
        <taxon>Rodentia</taxon>
        <taxon>Myomorpha</taxon>
        <taxon>Muroidea</taxon>
        <taxon>Muridae</taxon>
        <taxon>Murinae</taxon>
        <taxon>Mus</taxon>
        <taxon>Mus</taxon>
    </lineage>
</organism>